<sequence length="225" mass="25305">MGIRAIVVDTAGTTTDLNFIKDTLFTYSAKALPDFLKENETNVLVDNCICDVRDIALEPDASLERVVEILQQWVEEDRKATPLKTLQGLIWKQGYARGEFTGHIFPDFIDTIESIKQQNIRIYSFSSGSAEAQKLLFSHSDGGDLTPHFDGHFDTRTGNKLFKQAYCNIINTISLAPKQVLFISDVIEELKAAEEAGMRTLQMVRSADQRTGNFKQIASFKELTF</sequence>
<gene>
    <name evidence="1" type="primary">mtnC</name>
    <name type="ordered locus">Swoo_4855</name>
</gene>
<name>MTNC_SHEWM</name>
<keyword id="KW-0028">Amino-acid biosynthesis</keyword>
<keyword id="KW-0378">Hydrolase</keyword>
<keyword id="KW-0460">Magnesium</keyword>
<keyword id="KW-0479">Metal-binding</keyword>
<keyword id="KW-0486">Methionine biosynthesis</keyword>
<keyword id="KW-1185">Reference proteome</keyword>
<comment type="function">
    <text evidence="1">Bifunctional enzyme that catalyzes the enolization of 2,3-diketo-5-methylthiopentyl-1-phosphate (DK-MTP-1-P) into the intermediate 2-hydroxy-3-keto-5-methylthiopentenyl-1-phosphate (HK-MTPenyl-1-P), which is then dephosphorylated to form the acireductone 1,2-dihydroxy-3-keto-5-methylthiopentene (DHK-MTPene).</text>
</comment>
<comment type="catalytic activity">
    <reaction evidence="1">
        <text>5-methylsulfanyl-2,3-dioxopentyl phosphate + H2O = 1,2-dihydroxy-5-(methylsulfanyl)pent-1-en-3-one + phosphate</text>
        <dbReference type="Rhea" id="RHEA:21700"/>
        <dbReference type="ChEBI" id="CHEBI:15377"/>
        <dbReference type="ChEBI" id="CHEBI:43474"/>
        <dbReference type="ChEBI" id="CHEBI:49252"/>
        <dbReference type="ChEBI" id="CHEBI:58828"/>
        <dbReference type="EC" id="3.1.3.77"/>
    </reaction>
</comment>
<comment type="cofactor">
    <cofactor evidence="1">
        <name>Mg(2+)</name>
        <dbReference type="ChEBI" id="CHEBI:18420"/>
    </cofactor>
    <text evidence="1">Binds 1 Mg(2+) ion per subunit.</text>
</comment>
<comment type="pathway">
    <text evidence="1">Amino-acid biosynthesis; L-methionine biosynthesis via salvage pathway; L-methionine from S-methyl-5-thio-alpha-D-ribose 1-phosphate: step 3/6.</text>
</comment>
<comment type="pathway">
    <text evidence="1">Amino-acid biosynthesis; L-methionine biosynthesis via salvage pathway; L-methionine from S-methyl-5-thio-alpha-D-ribose 1-phosphate: step 4/6.</text>
</comment>
<comment type="subunit">
    <text evidence="1">Monomer.</text>
</comment>
<comment type="similarity">
    <text evidence="1">Belongs to the HAD-like hydrolase superfamily. MasA/MtnC family.</text>
</comment>
<organism>
    <name type="scientific">Shewanella woodyi (strain ATCC 51908 / MS32)</name>
    <dbReference type="NCBI Taxonomy" id="392500"/>
    <lineage>
        <taxon>Bacteria</taxon>
        <taxon>Pseudomonadati</taxon>
        <taxon>Pseudomonadota</taxon>
        <taxon>Gammaproteobacteria</taxon>
        <taxon>Alteromonadales</taxon>
        <taxon>Shewanellaceae</taxon>
        <taxon>Shewanella</taxon>
    </lineage>
</organism>
<dbReference type="EC" id="3.1.3.77" evidence="1"/>
<dbReference type="EMBL" id="CP000961">
    <property type="protein sequence ID" value="ACA89104.1"/>
    <property type="molecule type" value="Genomic_DNA"/>
</dbReference>
<dbReference type="RefSeq" id="WP_012327421.1">
    <property type="nucleotide sequence ID" value="NC_010506.1"/>
</dbReference>
<dbReference type="SMR" id="B1KPZ1"/>
<dbReference type="STRING" id="392500.Swoo_4855"/>
<dbReference type="KEGG" id="swd:Swoo_4855"/>
<dbReference type="eggNOG" id="COG4229">
    <property type="taxonomic scope" value="Bacteria"/>
</dbReference>
<dbReference type="HOGENOM" id="CLU_023273_0_0_6"/>
<dbReference type="UniPathway" id="UPA00904">
    <property type="reaction ID" value="UER00876"/>
</dbReference>
<dbReference type="UniPathway" id="UPA00904">
    <property type="reaction ID" value="UER00877"/>
</dbReference>
<dbReference type="Proteomes" id="UP000002168">
    <property type="component" value="Chromosome"/>
</dbReference>
<dbReference type="GO" id="GO:0043715">
    <property type="term" value="F:2,3-diketo-5-methylthiopentyl-1-phosphate enolase activity"/>
    <property type="evidence" value="ECO:0007669"/>
    <property type="project" value="UniProtKB-UniRule"/>
</dbReference>
<dbReference type="GO" id="GO:0043716">
    <property type="term" value="F:2-hydroxy-3-keto-5-methylthiopentenyl-1-phosphate phosphatase activity"/>
    <property type="evidence" value="ECO:0007669"/>
    <property type="project" value="UniProtKB-UniRule"/>
</dbReference>
<dbReference type="GO" id="GO:0043874">
    <property type="term" value="F:acireductone synthase activity"/>
    <property type="evidence" value="ECO:0007669"/>
    <property type="project" value="UniProtKB-EC"/>
</dbReference>
<dbReference type="GO" id="GO:0000287">
    <property type="term" value="F:magnesium ion binding"/>
    <property type="evidence" value="ECO:0007669"/>
    <property type="project" value="UniProtKB-UniRule"/>
</dbReference>
<dbReference type="GO" id="GO:0019509">
    <property type="term" value="P:L-methionine salvage from methylthioadenosine"/>
    <property type="evidence" value="ECO:0007669"/>
    <property type="project" value="UniProtKB-UniRule"/>
</dbReference>
<dbReference type="CDD" id="cd01629">
    <property type="entry name" value="HAD_EP"/>
    <property type="match status" value="1"/>
</dbReference>
<dbReference type="FunFam" id="1.10.720.60:FF:000008">
    <property type="entry name" value="Enolase-phosphatase E1"/>
    <property type="match status" value="1"/>
</dbReference>
<dbReference type="Gene3D" id="1.10.720.60">
    <property type="match status" value="1"/>
</dbReference>
<dbReference type="Gene3D" id="3.40.50.1000">
    <property type="entry name" value="HAD superfamily/HAD-like"/>
    <property type="match status" value="1"/>
</dbReference>
<dbReference type="HAMAP" id="MF_01681">
    <property type="entry name" value="Salvage_MtnC"/>
    <property type="match status" value="1"/>
</dbReference>
<dbReference type="InterPro" id="IPR023943">
    <property type="entry name" value="Enolase-ppase_E1"/>
</dbReference>
<dbReference type="InterPro" id="IPR036412">
    <property type="entry name" value="HAD-like_sf"/>
</dbReference>
<dbReference type="InterPro" id="IPR006439">
    <property type="entry name" value="HAD-SF_hydro_IA"/>
</dbReference>
<dbReference type="InterPro" id="IPR023214">
    <property type="entry name" value="HAD_sf"/>
</dbReference>
<dbReference type="NCBIfam" id="TIGR01691">
    <property type="entry name" value="enolase-ppase"/>
    <property type="match status" value="1"/>
</dbReference>
<dbReference type="NCBIfam" id="TIGR01549">
    <property type="entry name" value="HAD-SF-IA-v1"/>
    <property type="match status" value="1"/>
</dbReference>
<dbReference type="PANTHER" id="PTHR20371">
    <property type="entry name" value="ENOLASE-PHOSPHATASE E1"/>
    <property type="match status" value="1"/>
</dbReference>
<dbReference type="PANTHER" id="PTHR20371:SF1">
    <property type="entry name" value="ENOLASE-PHOSPHATASE E1"/>
    <property type="match status" value="1"/>
</dbReference>
<dbReference type="Pfam" id="PF00702">
    <property type="entry name" value="Hydrolase"/>
    <property type="match status" value="1"/>
</dbReference>
<dbReference type="SFLD" id="SFLDG01133">
    <property type="entry name" value="C1.5.4:_Enolase-phosphatase_Li"/>
    <property type="match status" value="1"/>
</dbReference>
<dbReference type="SFLD" id="SFLDF00044">
    <property type="entry name" value="enolase-phosphatase"/>
    <property type="match status" value="1"/>
</dbReference>
<dbReference type="SUPFAM" id="SSF56784">
    <property type="entry name" value="HAD-like"/>
    <property type="match status" value="1"/>
</dbReference>
<protein>
    <recommendedName>
        <fullName evidence="1">Enolase-phosphatase E1</fullName>
        <ecNumber evidence="1">3.1.3.77</ecNumber>
    </recommendedName>
    <alternativeName>
        <fullName evidence="1">2,3-diketo-5-methylthio-1-phosphopentane phosphatase</fullName>
    </alternativeName>
</protein>
<proteinExistence type="inferred from homology"/>
<feature type="chain" id="PRO_0000357412" description="Enolase-phosphatase E1">
    <location>
        <begin position="1"/>
        <end position="225"/>
    </location>
</feature>
<evidence type="ECO:0000255" key="1">
    <source>
        <dbReference type="HAMAP-Rule" id="MF_01681"/>
    </source>
</evidence>
<reference key="1">
    <citation type="submission" date="2008-02" db="EMBL/GenBank/DDBJ databases">
        <title>Complete sequence of Shewanella woodyi ATCC 51908.</title>
        <authorList>
            <consortium name="US DOE Joint Genome Institute"/>
            <person name="Copeland A."/>
            <person name="Lucas S."/>
            <person name="Lapidus A."/>
            <person name="Glavina del Rio T."/>
            <person name="Dalin E."/>
            <person name="Tice H."/>
            <person name="Bruce D."/>
            <person name="Goodwin L."/>
            <person name="Pitluck S."/>
            <person name="Sims D."/>
            <person name="Brettin T."/>
            <person name="Detter J.C."/>
            <person name="Han C."/>
            <person name="Kuske C.R."/>
            <person name="Schmutz J."/>
            <person name="Larimer F."/>
            <person name="Land M."/>
            <person name="Hauser L."/>
            <person name="Kyrpides N."/>
            <person name="Lykidis A."/>
            <person name="Zhao J.-S."/>
            <person name="Richardson P."/>
        </authorList>
    </citation>
    <scope>NUCLEOTIDE SEQUENCE [LARGE SCALE GENOMIC DNA]</scope>
    <source>
        <strain>ATCC 51908 / MS32</strain>
    </source>
</reference>
<accession>B1KPZ1</accession>